<reference key="1">
    <citation type="journal article" date="1994" name="Yeast">
        <title>Development of a transformation system for the yeast Yamadazyma (Pichia) ohmeri.</title>
        <authorList>
            <person name="Piredda S."/>
            <person name="Gaillardin C."/>
        </authorList>
    </citation>
    <scope>NUCLEOTIDE SEQUENCE [GENOMIC DNA]</scope>
</reference>
<evidence type="ECO:0000250" key="1"/>
<evidence type="ECO:0000305" key="2"/>
<protein>
    <recommendedName>
        <fullName>3-isopropylmalate dehydrogenase</fullName>
        <shortName>3-IPM-DH</shortName>
        <shortName>IMDH</shortName>
        <ecNumber>1.1.1.85</ecNumber>
    </recommendedName>
    <alternativeName>
        <fullName>Beta-IPM dehydrogenase</fullName>
    </alternativeName>
</protein>
<proteinExistence type="inferred from homology"/>
<name>LEU3_KODOH</name>
<accession>P41926</accession>
<gene>
    <name type="primary">LEU2</name>
</gene>
<comment type="function">
    <text>Catalyzes the oxidation of 3-carboxy-2-hydroxy-4-methylpentanoate (3-isopropylmalate) to 3-carboxy-4-methyl-2-oxopentanoate. The product decarboxylates to 4-methyl-2 oxopentanoate.</text>
</comment>
<comment type="catalytic activity">
    <reaction>
        <text>(2R,3S)-3-isopropylmalate + NAD(+) = 4-methyl-2-oxopentanoate + CO2 + NADH</text>
        <dbReference type="Rhea" id="RHEA:32271"/>
        <dbReference type="ChEBI" id="CHEBI:16526"/>
        <dbReference type="ChEBI" id="CHEBI:17865"/>
        <dbReference type="ChEBI" id="CHEBI:35121"/>
        <dbReference type="ChEBI" id="CHEBI:57540"/>
        <dbReference type="ChEBI" id="CHEBI:57945"/>
        <dbReference type="EC" id="1.1.1.85"/>
    </reaction>
</comment>
<comment type="cofactor">
    <cofactor evidence="1">
        <name>Mg(2+)</name>
        <dbReference type="ChEBI" id="CHEBI:18420"/>
    </cofactor>
    <cofactor evidence="1">
        <name>Mn(2+)</name>
        <dbReference type="ChEBI" id="CHEBI:29035"/>
    </cofactor>
    <text evidence="1">Binds 1 Mg(2+) or Mn(2+) ion per subunit.</text>
</comment>
<comment type="pathway">
    <text>Amino-acid biosynthesis; L-leucine biosynthesis; L-leucine from 3-methyl-2-oxobutanoate: step 3/4.</text>
</comment>
<comment type="subunit">
    <text evidence="1">Homodimer.</text>
</comment>
<comment type="subcellular location">
    <subcellularLocation>
        <location>Cytoplasm</location>
    </subcellularLocation>
</comment>
<comment type="similarity">
    <text evidence="2">Belongs to the isocitrate and isopropylmalate dehydrogenases family.</text>
</comment>
<feature type="chain" id="PRO_0000083620" description="3-isopropylmalate dehydrogenase">
    <location>
        <begin position="1"/>
        <end position="368"/>
    </location>
</feature>
<feature type="binding site" evidence="1">
    <location>
        <begin position="77"/>
        <end position="88"/>
    </location>
    <ligand>
        <name>NAD(+)</name>
        <dbReference type="ChEBI" id="CHEBI:57540"/>
    </ligand>
</feature>
<feature type="binding site" evidence="1">
    <location>
        <position position="95"/>
    </location>
    <ligand>
        <name>substrate</name>
    </ligand>
</feature>
<feature type="binding site" evidence="1">
    <location>
        <position position="105"/>
    </location>
    <ligand>
        <name>substrate</name>
    </ligand>
</feature>
<feature type="binding site" evidence="1">
    <location>
        <position position="134"/>
    </location>
    <ligand>
        <name>substrate</name>
    </ligand>
</feature>
<feature type="binding site" evidence="1">
    <location>
        <position position="226"/>
    </location>
    <ligand>
        <name>Mg(2+)</name>
        <dbReference type="ChEBI" id="CHEBI:18420"/>
    </ligand>
</feature>
<feature type="binding site" evidence="1">
    <location>
        <position position="226"/>
    </location>
    <ligand>
        <name>substrate</name>
    </ligand>
</feature>
<feature type="binding site" evidence="1">
    <location>
        <position position="251"/>
    </location>
    <ligand>
        <name>Mg(2+)</name>
        <dbReference type="ChEBI" id="CHEBI:18420"/>
    </ligand>
</feature>
<feature type="binding site" evidence="1">
    <location>
        <position position="255"/>
    </location>
    <ligand>
        <name>Mg(2+)</name>
        <dbReference type="ChEBI" id="CHEBI:18420"/>
    </ligand>
</feature>
<feature type="binding site" evidence="1">
    <location>
        <begin position="290"/>
        <end position="301"/>
    </location>
    <ligand>
        <name>NAD(+)</name>
        <dbReference type="ChEBI" id="CHEBI:57540"/>
    </ligand>
</feature>
<feature type="site" description="Important for catalysis" evidence="1">
    <location>
        <position position="141"/>
    </location>
</feature>
<feature type="site" description="Important for catalysis" evidence="1">
    <location>
        <position position="193"/>
    </location>
</feature>
<sequence length="368" mass="39315">MSTKTITVVPGDHVGTEICDEAIKVLKAIEKVSPVKFEFKHHLIGGAAIDATGVPLPDETLEAAKSSDAVLLGAVGGPKWGTGAVRPEQGLLKIRKELNLYANLRPCNFVSDSLLELSPLKSEIVKGTNFTVVRELVGGIYFGERQEQEESSDGQSAWDTEKYSVEEVTRITRMAAFMALQHNPPLPIWSLDKANVLALSRLWRKTVDHVMSTEFPQLKVQHQLIDSAAMILVKSPSQLNGVIITSNMFGDIISDEASVIPGSLGLLPSASLASLPDTNSAFGLYEPCHGSAPDLPANKVNPVATILSVAMMLRLSLDCLKEAEALEKAVGQVLDAGIRTADLRGSSSTKEVGDAVAAAVEKILAEGK</sequence>
<organism>
    <name type="scientific">Kodamaea ohmeri</name>
    <name type="common">Yeast</name>
    <name type="synonym">Yamadazyma ohmeri</name>
    <dbReference type="NCBI Taxonomy" id="34356"/>
    <lineage>
        <taxon>Eukaryota</taxon>
        <taxon>Fungi</taxon>
        <taxon>Dikarya</taxon>
        <taxon>Ascomycota</taxon>
        <taxon>Saccharomycotina</taxon>
        <taxon>Pichiomycetes</taxon>
        <taxon>Debaryomycetaceae</taxon>
        <taxon>Kodamaea</taxon>
    </lineage>
</organism>
<dbReference type="EC" id="1.1.1.85"/>
<dbReference type="EMBL" id="Z35101">
    <property type="protein sequence ID" value="CAA84484.1"/>
    <property type="molecule type" value="Genomic_DNA"/>
</dbReference>
<dbReference type="PIR" id="S50698">
    <property type="entry name" value="S50698"/>
</dbReference>
<dbReference type="SMR" id="P41926"/>
<dbReference type="UniPathway" id="UPA00048">
    <property type="reaction ID" value="UER00072"/>
</dbReference>
<dbReference type="GO" id="GO:0005829">
    <property type="term" value="C:cytosol"/>
    <property type="evidence" value="ECO:0007669"/>
    <property type="project" value="TreeGrafter"/>
</dbReference>
<dbReference type="GO" id="GO:0003862">
    <property type="term" value="F:3-isopropylmalate dehydrogenase activity"/>
    <property type="evidence" value="ECO:0007669"/>
    <property type="project" value="UniProtKB-EC"/>
</dbReference>
<dbReference type="GO" id="GO:0000287">
    <property type="term" value="F:magnesium ion binding"/>
    <property type="evidence" value="ECO:0007669"/>
    <property type="project" value="InterPro"/>
</dbReference>
<dbReference type="GO" id="GO:0051287">
    <property type="term" value="F:NAD binding"/>
    <property type="evidence" value="ECO:0007669"/>
    <property type="project" value="InterPro"/>
</dbReference>
<dbReference type="GO" id="GO:0009098">
    <property type="term" value="P:L-leucine biosynthetic process"/>
    <property type="evidence" value="ECO:0007669"/>
    <property type="project" value="UniProtKB-UniPathway"/>
</dbReference>
<dbReference type="FunFam" id="3.40.718.10:FF:000006">
    <property type="entry name" value="3-isopropylmalate dehydrogenase"/>
    <property type="match status" value="1"/>
</dbReference>
<dbReference type="Gene3D" id="3.40.718.10">
    <property type="entry name" value="Isopropylmalate Dehydrogenase"/>
    <property type="match status" value="1"/>
</dbReference>
<dbReference type="InterPro" id="IPR019818">
    <property type="entry name" value="IsoCit/isopropylmalate_DH_CS"/>
</dbReference>
<dbReference type="InterPro" id="IPR024084">
    <property type="entry name" value="IsoPropMal-DH-like_dom"/>
</dbReference>
<dbReference type="InterPro" id="IPR004429">
    <property type="entry name" value="Isopropylmalate_DH"/>
</dbReference>
<dbReference type="NCBIfam" id="TIGR00169">
    <property type="entry name" value="leuB"/>
    <property type="match status" value="1"/>
</dbReference>
<dbReference type="PANTHER" id="PTHR42979">
    <property type="entry name" value="3-ISOPROPYLMALATE DEHYDROGENASE"/>
    <property type="match status" value="1"/>
</dbReference>
<dbReference type="PANTHER" id="PTHR42979:SF1">
    <property type="entry name" value="3-ISOPROPYLMALATE DEHYDROGENASE"/>
    <property type="match status" value="1"/>
</dbReference>
<dbReference type="Pfam" id="PF00180">
    <property type="entry name" value="Iso_dh"/>
    <property type="match status" value="1"/>
</dbReference>
<dbReference type="SMART" id="SM01329">
    <property type="entry name" value="Iso_dh"/>
    <property type="match status" value="1"/>
</dbReference>
<dbReference type="SUPFAM" id="SSF53659">
    <property type="entry name" value="Isocitrate/Isopropylmalate dehydrogenase-like"/>
    <property type="match status" value="1"/>
</dbReference>
<dbReference type="PROSITE" id="PS00470">
    <property type="entry name" value="IDH_IMDH"/>
    <property type="match status" value="1"/>
</dbReference>
<keyword id="KW-0028">Amino-acid biosynthesis</keyword>
<keyword id="KW-0100">Branched-chain amino acid biosynthesis</keyword>
<keyword id="KW-0963">Cytoplasm</keyword>
<keyword id="KW-0432">Leucine biosynthesis</keyword>
<keyword id="KW-0460">Magnesium</keyword>
<keyword id="KW-0464">Manganese</keyword>
<keyword id="KW-0479">Metal-binding</keyword>
<keyword id="KW-0520">NAD</keyword>
<keyword id="KW-0560">Oxidoreductase</keyword>